<keyword id="KW-0031">Aminopeptidase</keyword>
<keyword id="KW-0325">Glycoprotein</keyword>
<keyword id="KW-0378">Hydrolase</keyword>
<keyword id="KW-0479">Metal-binding</keyword>
<keyword id="KW-0482">Metalloprotease</keyword>
<keyword id="KW-0645">Protease</keyword>
<keyword id="KW-1185">Reference proteome</keyword>
<keyword id="KW-0964">Secreted</keyword>
<keyword id="KW-0732">Signal</keyword>
<keyword id="KW-0843">Virulence</keyword>
<keyword id="KW-0862">Zinc</keyword>
<evidence type="ECO:0000250" key="1"/>
<evidence type="ECO:0000250" key="2">
    <source>
        <dbReference type="UniProtKB" id="P80561"/>
    </source>
</evidence>
<evidence type="ECO:0000255" key="3"/>
<evidence type="ECO:0000269" key="4">
    <source>
    </source>
</evidence>
<evidence type="ECO:0000305" key="5"/>
<sequence length="495" mass="53243">MKSQLLSLAVAVTTISQGVVGQEPFGWPFKPMVTQDDLQNKIKLKDIMAGVEKLQSFSDAHPEKNRVFGGNGHKDTVEWIYNEIKATGYYDVKKQEQVHLWSHAEAAVSANGKELKASAMSYSPPASKIMAELVVAKNNGCNATDYPENTQGKIVLVERGVCSFGEKSSQAGDAKAAGAIVYNNVPGSLAGTLGGLDKRHVPTAGLSQEDGKNLATLIASGKVDVTMNVISLFENRTTWNVIAETKGGDHNNVVMLGAHSDSVDAGPGINDNGSGSIGIMTVAKALTNFKLNNAVRFAWWTAEEFGLLGSTFYVNSLDDRELHKVKLYLNFDMIGSPNFANQIYDGDGSAYNMTGPAGSAEIEYLFEKFFDDQGIPHQPTAFTGRSDYSAFIKRNVPAGGLFTGAEVVKTPEQVKLFGGEAGVAYDKNYHGKGDTVANINKGAIFLNTRAIAYAIAEYARSLKGFPTRPKTGKRDVNPQYSKMPGGGCGHHTVFM</sequence>
<accession>D4AWC9</accession>
<feature type="signal peptide" evidence="3">
    <location>
        <begin position="1"/>
        <end position="21"/>
    </location>
</feature>
<feature type="chain" id="PRO_0000397767" description="Probable leucine aminopeptidase 2">
    <location>
        <begin position="22"/>
        <end position="495"/>
    </location>
</feature>
<feature type="domain" description="PA">
    <location>
        <begin position="130"/>
        <end position="216"/>
    </location>
</feature>
<feature type="active site" description="Proton acceptor" evidence="2">
    <location>
        <position position="303"/>
    </location>
</feature>
<feature type="binding site" evidence="2">
    <location>
        <position position="259"/>
    </location>
    <ligand>
        <name>Zn(2+)</name>
        <dbReference type="ChEBI" id="CHEBI:29105"/>
        <label>1</label>
        <note>catalytic</note>
    </ligand>
</feature>
<feature type="binding site" evidence="1 2">
    <location>
        <position position="271"/>
    </location>
    <ligand>
        <name>Zn(2+)</name>
        <dbReference type="ChEBI" id="CHEBI:29105"/>
        <label>1</label>
        <note>catalytic</note>
    </ligand>
</feature>
<feature type="binding site" evidence="2">
    <location>
        <position position="271"/>
    </location>
    <ligand>
        <name>Zn(2+)</name>
        <dbReference type="ChEBI" id="CHEBI:29105"/>
        <label>2</label>
        <note>catalytic</note>
    </ligand>
</feature>
<feature type="binding site" evidence="1 2">
    <location>
        <position position="304"/>
    </location>
    <ligand>
        <name>Zn(2+)</name>
        <dbReference type="ChEBI" id="CHEBI:29105"/>
        <label>2</label>
        <note>catalytic</note>
    </ligand>
</feature>
<feature type="binding site" evidence="2">
    <location>
        <position position="332"/>
    </location>
    <ligand>
        <name>Zn(2+)</name>
        <dbReference type="ChEBI" id="CHEBI:29105"/>
        <label>1</label>
        <note>catalytic</note>
    </ligand>
</feature>
<feature type="binding site" evidence="2">
    <location>
        <position position="430"/>
    </location>
    <ligand>
        <name>Zn(2+)</name>
        <dbReference type="ChEBI" id="CHEBI:29105"/>
        <label>2</label>
        <note>catalytic</note>
    </ligand>
</feature>
<feature type="site" description="Transition state stabilizer" evidence="2">
    <location>
        <position position="429"/>
    </location>
</feature>
<feature type="glycosylation site" description="N-linked (GlcNAc...) asparagine" evidence="3">
    <location>
        <position position="142"/>
    </location>
</feature>
<feature type="glycosylation site" description="N-linked (GlcNAc...) asparagine" evidence="3">
    <location>
        <position position="235"/>
    </location>
</feature>
<feature type="glycosylation site" description="N-linked (GlcNAc...) asparagine" evidence="3">
    <location>
        <position position="272"/>
    </location>
</feature>
<feature type="glycosylation site" description="N-linked (GlcNAc...) asparagine" evidence="3">
    <location>
        <position position="352"/>
    </location>
</feature>
<proteinExistence type="evidence at protein level"/>
<gene>
    <name type="primary">LAP2</name>
    <name type="ORF">ARB_00494</name>
</gene>
<protein>
    <recommendedName>
        <fullName>Probable leucine aminopeptidase 2</fullName>
        <ecNumber>3.4.11.-</ecNumber>
    </recommendedName>
    <alternativeName>
        <fullName>Leucyl aminopeptidase 2</fullName>
        <shortName>LAP2</shortName>
    </alternativeName>
</protein>
<reference key="1">
    <citation type="journal article" date="2011" name="Genome Biol.">
        <title>Comparative and functional genomics provide insights into the pathogenicity of dermatophytic fungi.</title>
        <authorList>
            <person name="Burmester A."/>
            <person name="Shelest E."/>
            <person name="Gloeckner G."/>
            <person name="Heddergott C."/>
            <person name="Schindler S."/>
            <person name="Staib P."/>
            <person name="Heidel A."/>
            <person name="Felder M."/>
            <person name="Petzold A."/>
            <person name="Szafranski K."/>
            <person name="Feuermann M."/>
            <person name="Pedruzzi I."/>
            <person name="Priebe S."/>
            <person name="Groth M."/>
            <person name="Winkler R."/>
            <person name="Li W."/>
            <person name="Kniemeyer O."/>
            <person name="Schroeckh V."/>
            <person name="Hertweck C."/>
            <person name="Hube B."/>
            <person name="White T.C."/>
            <person name="Platzer M."/>
            <person name="Guthke R."/>
            <person name="Heitman J."/>
            <person name="Woestemeyer J."/>
            <person name="Zipfel P.F."/>
            <person name="Monod M."/>
            <person name="Brakhage A.A."/>
        </authorList>
    </citation>
    <scope>NUCLEOTIDE SEQUENCE [LARGE SCALE GENOMIC DNA]</scope>
    <scope>IDENTIFICATION BY MASS SPECTROMETRY</scope>
    <scope>SUBCELLULAR LOCATION</scope>
    <source>
        <strain>ATCC MYA-4681 / CBS 112371</strain>
    </source>
</reference>
<organism>
    <name type="scientific">Arthroderma benhamiae (strain ATCC MYA-4681 / CBS 112371)</name>
    <name type="common">Trichophyton mentagrophytes</name>
    <dbReference type="NCBI Taxonomy" id="663331"/>
    <lineage>
        <taxon>Eukaryota</taxon>
        <taxon>Fungi</taxon>
        <taxon>Dikarya</taxon>
        <taxon>Ascomycota</taxon>
        <taxon>Pezizomycotina</taxon>
        <taxon>Eurotiomycetes</taxon>
        <taxon>Eurotiomycetidae</taxon>
        <taxon>Onygenales</taxon>
        <taxon>Arthrodermataceae</taxon>
        <taxon>Trichophyton</taxon>
    </lineage>
</organism>
<dbReference type="EC" id="3.4.11.-"/>
<dbReference type="EMBL" id="ABSU01000014">
    <property type="protein sequence ID" value="EFE32669.1"/>
    <property type="molecule type" value="Genomic_DNA"/>
</dbReference>
<dbReference type="RefSeq" id="XP_003013309.1">
    <property type="nucleotide sequence ID" value="XM_003013263.1"/>
</dbReference>
<dbReference type="SMR" id="D4AWC9"/>
<dbReference type="STRING" id="663331.D4AWC9"/>
<dbReference type="GlyCosmos" id="D4AWC9">
    <property type="glycosylation" value="4 sites, No reported glycans"/>
</dbReference>
<dbReference type="GeneID" id="9519263"/>
<dbReference type="KEGG" id="abe:ARB_00494"/>
<dbReference type="eggNOG" id="KOG2195">
    <property type="taxonomic scope" value="Eukaryota"/>
</dbReference>
<dbReference type="HOGENOM" id="CLU_024336_0_2_1"/>
<dbReference type="OMA" id="VRFCFWT"/>
<dbReference type="OrthoDB" id="2214at2759"/>
<dbReference type="Proteomes" id="UP000008866">
    <property type="component" value="Unassembled WGS sequence"/>
</dbReference>
<dbReference type="GO" id="GO:0005576">
    <property type="term" value="C:extracellular region"/>
    <property type="evidence" value="ECO:0007669"/>
    <property type="project" value="UniProtKB-SubCell"/>
</dbReference>
<dbReference type="GO" id="GO:0004177">
    <property type="term" value="F:aminopeptidase activity"/>
    <property type="evidence" value="ECO:0007669"/>
    <property type="project" value="UniProtKB-KW"/>
</dbReference>
<dbReference type="GO" id="GO:0046872">
    <property type="term" value="F:metal ion binding"/>
    <property type="evidence" value="ECO:0007669"/>
    <property type="project" value="UniProtKB-KW"/>
</dbReference>
<dbReference type="GO" id="GO:0008235">
    <property type="term" value="F:metalloexopeptidase activity"/>
    <property type="evidence" value="ECO:0007669"/>
    <property type="project" value="InterPro"/>
</dbReference>
<dbReference type="GO" id="GO:0006508">
    <property type="term" value="P:proteolysis"/>
    <property type="evidence" value="ECO:0007669"/>
    <property type="project" value="UniProtKB-KW"/>
</dbReference>
<dbReference type="CDD" id="cd03876">
    <property type="entry name" value="M28_SGAP_like"/>
    <property type="match status" value="1"/>
</dbReference>
<dbReference type="CDD" id="cd02130">
    <property type="entry name" value="PA_ScAPY_like"/>
    <property type="match status" value="1"/>
</dbReference>
<dbReference type="FunFam" id="3.40.630.10:FF:000054">
    <property type="entry name" value="Peptide hydrolase"/>
    <property type="match status" value="1"/>
</dbReference>
<dbReference type="Gene3D" id="3.50.30.30">
    <property type="match status" value="1"/>
</dbReference>
<dbReference type="Gene3D" id="3.40.630.10">
    <property type="entry name" value="Zn peptidases"/>
    <property type="match status" value="1"/>
</dbReference>
<dbReference type="InterPro" id="IPR045175">
    <property type="entry name" value="M28_fam"/>
</dbReference>
<dbReference type="InterPro" id="IPR041756">
    <property type="entry name" value="M28_SGAP-like"/>
</dbReference>
<dbReference type="InterPro" id="IPR046450">
    <property type="entry name" value="PA_dom_sf"/>
</dbReference>
<dbReference type="InterPro" id="IPR003137">
    <property type="entry name" value="PA_domain"/>
</dbReference>
<dbReference type="InterPro" id="IPR007484">
    <property type="entry name" value="Peptidase_M28"/>
</dbReference>
<dbReference type="PANTHER" id="PTHR12147">
    <property type="entry name" value="METALLOPEPTIDASE M28 FAMILY MEMBER"/>
    <property type="match status" value="1"/>
</dbReference>
<dbReference type="PANTHER" id="PTHR12147:SF57">
    <property type="entry name" value="PEPTIDE HYDROLASE"/>
    <property type="match status" value="1"/>
</dbReference>
<dbReference type="Pfam" id="PF02225">
    <property type="entry name" value="PA"/>
    <property type="match status" value="1"/>
</dbReference>
<dbReference type="Pfam" id="PF04389">
    <property type="entry name" value="Peptidase_M28"/>
    <property type="match status" value="1"/>
</dbReference>
<dbReference type="SUPFAM" id="SSF52025">
    <property type="entry name" value="PA domain"/>
    <property type="match status" value="1"/>
</dbReference>
<dbReference type="SUPFAM" id="SSF53187">
    <property type="entry name" value="Zn-dependent exopeptidases"/>
    <property type="match status" value="1"/>
</dbReference>
<name>LAP2_ARTBC</name>
<comment type="function">
    <text evidence="1">Extracellular aminopeptidase that releases a wide variety of amino acids from natural peptides and contributes to pathogenicity.</text>
</comment>
<comment type="cofactor">
    <cofactor evidence="2">
        <name>Zn(2+)</name>
        <dbReference type="ChEBI" id="CHEBI:29105"/>
    </cofactor>
    <text evidence="2">Binds 2 Zn(2+) ions per subunit.</text>
</comment>
<comment type="subunit">
    <text evidence="1">Monomer.</text>
</comment>
<comment type="subcellular location">
    <subcellularLocation>
        <location evidence="4">Secreted</location>
    </subcellularLocation>
</comment>
<comment type="similarity">
    <text evidence="5">Belongs to the peptidase M28 family. M28A subfamily.</text>
</comment>